<evidence type="ECO:0000255" key="1"/>
<evidence type="ECO:0000256" key="2">
    <source>
        <dbReference type="SAM" id="MobiDB-lite"/>
    </source>
</evidence>
<evidence type="ECO:0000305" key="3"/>
<organism>
    <name type="scientific">Brassica napus</name>
    <name type="common">Rape</name>
    <dbReference type="NCBI Taxonomy" id="3708"/>
    <lineage>
        <taxon>Eukaryota</taxon>
        <taxon>Viridiplantae</taxon>
        <taxon>Streptophyta</taxon>
        <taxon>Embryophyta</taxon>
        <taxon>Tracheophyta</taxon>
        <taxon>Spermatophyta</taxon>
        <taxon>Magnoliopsida</taxon>
        <taxon>eudicotyledons</taxon>
        <taxon>Gunneridae</taxon>
        <taxon>Pentapetalae</taxon>
        <taxon>rosids</taxon>
        <taxon>malvids</taxon>
        <taxon>Brassicales</taxon>
        <taxon>Brassicaceae</taxon>
        <taxon>Brassiceae</taxon>
        <taxon>Brassica</taxon>
    </lineage>
</organism>
<dbReference type="EMBL" id="X63779">
    <property type="protein sequence ID" value="CAA45313.1"/>
    <property type="molecule type" value="mRNA"/>
</dbReference>
<dbReference type="PIR" id="S25089">
    <property type="entry name" value="S25089"/>
</dbReference>
<dbReference type="SMR" id="P29109"/>
<dbReference type="GO" id="GO:0016020">
    <property type="term" value="C:membrane"/>
    <property type="evidence" value="ECO:0007669"/>
    <property type="project" value="UniProtKB-SubCell"/>
</dbReference>
<dbReference type="GO" id="GO:0012511">
    <property type="term" value="C:monolayer-surrounded lipid storage body"/>
    <property type="evidence" value="ECO:0007669"/>
    <property type="project" value="InterPro"/>
</dbReference>
<dbReference type="GO" id="GO:0009791">
    <property type="term" value="P:post-embryonic development"/>
    <property type="evidence" value="ECO:0007669"/>
    <property type="project" value="UniProtKB-ARBA"/>
</dbReference>
<dbReference type="GO" id="GO:0048608">
    <property type="term" value="P:reproductive structure development"/>
    <property type="evidence" value="ECO:0007669"/>
    <property type="project" value="UniProtKB-ARBA"/>
</dbReference>
<dbReference type="InterPro" id="IPR000136">
    <property type="entry name" value="Oleosin"/>
</dbReference>
<dbReference type="PANTHER" id="PTHR33203">
    <property type="entry name" value="OLEOSIN"/>
    <property type="match status" value="1"/>
</dbReference>
<dbReference type="PANTHER" id="PTHR33203:SF25">
    <property type="entry name" value="OLEOSIN 18.5 KDA"/>
    <property type="match status" value="1"/>
</dbReference>
<dbReference type="Pfam" id="PF01277">
    <property type="entry name" value="Oleosin"/>
    <property type="match status" value="1"/>
</dbReference>
<dbReference type="PROSITE" id="PS00811">
    <property type="entry name" value="OLEOSINS"/>
    <property type="match status" value="1"/>
</dbReference>
<proteinExistence type="evidence at transcript level"/>
<name>OLEO5_BRANA</name>
<keyword id="KW-0551">Lipid droplet</keyword>
<keyword id="KW-0472">Membrane</keyword>
<keyword id="KW-0677">Repeat</keyword>
<keyword id="KW-0812">Transmembrane</keyword>
<keyword id="KW-1133">Transmembrane helix</keyword>
<protein>
    <recommendedName>
        <fullName>Oleosin Bn-V</fullName>
        <shortName>BnV</shortName>
    </recommendedName>
</protein>
<comment type="function">
    <text>May have a structural role to stabilize the lipid body during desiccation of the seed by preventing coalescence of the oil. Probably interacts with both lipid and phospholipid moieties of lipid bodies. May also provide recognition signals for specific lipase anchorage in lipolysis during seedling growth.</text>
</comment>
<comment type="subcellular location">
    <subcellularLocation>
        <location>Lipid droplet</location>
    </subcellularLocation>
    <subcellularLocation>
        <location>Membrane</location>
        <topology>Multi-pass membrane protein</topology>
    </subcellularLocation>
    <text>Surface of oil bodies. Oleosins exist at a monolayer lipid/water interface.</text>
</comment>
<comment type="developmental stage">
    <text>Accumulates during the desiccation phase of embryo development.</text>
</comment>
<comment type="similarity">
    <text evidence="3">Belongs to the oleosin family.</text>
</comment>
<reference key="1">
    <citation type="journal article" date="1992" name="Plant Mol. Biol.">
        <title>Sequence of an oleosin cDNA from Brassica napus.</title>
        <authorList>
            <person name="Keddie J."/>
            <person name="Edwards E.-W."/>
            <person name="Gibbons T."/>
            <person name="Shaw C."/>
            <person name="Murphy D.J."/>
        </authorList>
    </citation>
    <scope>NUCLEOTIDE SEQUENCE [MRNA]</scope>
    <source>
        <strain>cv. Bienvenu</strain>
    </source>
</reference>
<sequence length="183" mass="20286">PARTHHDITTRDQYPLISRDRDQYGMIGRDQYNMSGQNYSKSRQIAKATTAVTAGDSLLVLSSLTLVGTVIALIVATPLLVIFSPILVPALITVALLITGFLSSGAFGIAAITVFSWIYKYATGEHPQGSDKLDSARMKLGSKAQDMKDRAYYYGQQHTGEEHDRDRDHRTDRDRTRGTQHTT</sequence>
<feature type="chain" id="PRO_0000108133" description="Oleosin Bn-V">
    <location>
        <begin position="1" status="less than"/>
        <end position="183"/>
    </location>
</feature>
<feature type="transmembrane region" description="Helical" evidence="1">
    <location>
        <begin position="57"/>
        <end position="77"/>
    </location>
</feature>
<feature type="transmembrane region" description="Helical" evidence="1">
    <location>
        <begin position="99"/>
        <end position="119"/>
    </location>
</feature>
<feature type="repeat">
    <location>
        <begin position="11"/>
        <end position="20"/>
    </location>
</feature>
<feature type="repeat">
    <location>
        <begin position="21"/>
        <end position="30"/>
    </location>
</feature>
<feature type="region of interest" description="Polar">
    <location>
        <begin position="1" status="less than"/>
        <end position="47"/>
    </location>
</feature>
<feature type="region of interest" description="Hydrophobic">
    <location>
        <begin position="48"/>
        <end position="119"/>
    </location>
</feature>
<feature type="region of interest" description="Disordered" evidence="2">
    <location>
        <begin position="154"/>
        <end position="183"/>
    </location>
</feature>
<feature type="compositionally biased region" description="Basic and acidic residues" evidence="2">
    <location>
        <begin position="159"/>
        <end position="177"/>
    </location>
</feature>
<feature type="non-terminal residue">
    <location>
        <position position="1"/>
    </location>
</feature>
<accession>P29109</accession>